<sequence length="397" mass="43302">MPDWLSALLITLLKAVLVALALLTAFAYMTLIERRLLGRIQLRPGPNRVGPMGLLQPLADAIKSIFKEDVTVTLADKLVYTLAPILAIGMALTAFGGIPAGPPGSLFGTDPWVYNLDAGILALLALTSMGVYGIFLGGWASGSKYPMLGSLRSSAQMISYELGMGLSVLGLLMLVGSTNFLDIVEWQAGPRGHGWLILFQVFAFALFMVSSFAEVNRTPFDLPEAEQELVAGYLTEYSSIKWALFQMAEYVNIMTASALMSTLFFGGYRGPTFLEPLIPGISSWPLVWLIAKIAFFMFLFIWVRATLPRLRYDQLMRLGWKLTLPLALVNTLVVAAVLAFVPAEGLFGIPRLWLLGAVSLLLLLILFAASDAVRGLWNSPALRNEEKRVPGRPLGGD</sequence>
<comment type="function">
    <text evidence="1">NDH-1 shuttles electrons from NADH, via FMN and iron-sulfur (Fe-S) centers, to quinones in the respiratory chain. The immediate electron acceptor for the enzyme in this species is believed to be ubiquinone. Couples the redox reaction to proton translocation (for every two electrons transferred, four hydrogen ions are translocated across the cytoplasmic membrane), and thus conserves the redox energy in a proton gradient. This subunit may bind ubiquinone.</text>
</comment>
<comment type="catalytic activity">
    <reaction evidence="1">
        <text>a quinone + NADH + 5 H(+)(in) = a quinol + NAD(+) + 4 H(+)(out)</text>
        <dbReference type="Rhea" id="RHEA:57888"/>
        <dbReference type="ChEBI" id="CHEBI:15378"/>
        <dbReference type="ChEBI" id="CHEBI:24646"/>
        <dbReference type="ChEBI" id="CHEBI:57540"/>
        <dbReference type="ChEBI" id="CHEBI:57945"/>
        <dbReference type="ChEBI" id="CHEBI:132124"/>
    </reaction>
</comment>
<comment type="subunit">
    <text evidence="1">NDH-1 is composed of 15 different subunits. Subunits NuoA, H, J, K, L, M, N constitute the membrane sector of the complex.</text>
</comment>
<comment type="subcellular location">
    <subcellularLocation>
        <location evidence="1">Cell membrane</location>
        <topology evidence="1">Multi-pass membrane protein</topology>
    </subcellularLocation>
</comment>
<comment type="similarity">
    <text evidence="1">Belongs to the complex I subunit 1 family.</text>
</comment>
<organism>
    <name type="scientific">Deinococcus radiodurans (strain ATCC 13939 / DSM 20539 / JCM 16871 / CCUG 27074 / LMG 4051 / NBRC 15346 / NCIMB 9279 / VKM B-1422 / R1)</name>
    <dbReference type="NCBI Taxonomy" id="243230"/>
    <lineage>
        <taxon>Bacteria</taxon>
        <taxon>Thermotogati</taxon>
        <taxon>Deinococcota</taxon>
        <taxon>Deinococci</taxon>
        <taxon>Deinococcales</taxon>
        <taxon>Deinococcaceae</taxon>
        <taxon>Deinococcus</taxon>
    </lineage>
</organism>
<gene>
    <name evidence="1" type="primary">nuoH</name>
    <name type="ordered locus">DR_1498</name>
</gene>
<name>NUOH_DEIRA</name>
<feature type="chain" id="PRO_0000244911" description="NADH-quinone oxidoreductase subunit H">
    <location>
        <begin position="1"/>
        <end position="397"/>
    </location>
</feature>
<feature type="transmembrane region" description="Helical" evidence="1">
    <location>
        <begin position="7"/>
        <end position="27"/>
    </location>
</feature>
<feature type="transmembrane region" description="Helical" evidence="1">
    <location>
        <begin position="78"/>
        <end position="98"/>
    </location>
</feature>
<feature type="transmembrane region" description="Helical" evidence="1">
    <location>
        <begin position="120"/>
        <end position="140"/>
    </location>
</feature>
<feature type="transmembrane region" description="Helical" evidence="1">
    <location>
        <begin position="164"/>
        <end position="184"/>
    </location>
</feature>
<feature type="transmembrane region" description="Helical" evidence="1">
    <location>
        <begin position="195"/>
        <end position="215"/>
    </location>
</feature>
<feature type="transmembrane region" description="Helical" evidence="1">
    <location>
        <begin position="247"/>
        <end position="267"/>
    </location>
</feature>
<feature type="transmembrane region" description="Helical" evidence="1">
    <location>
        <begin position="283"/>
        <end position="303"/>
    </location>
</feature>
<feature type="transmembrane region" description="Helical" evidence="1">
    <location>
        <begin position="322"/>
        <end position="342"/>
    </location>
</feature>
<feature type="transmembrane region" description="Helical" evidence="1">
    <location>
        <begin position="353"/>
        <end position="373"/>
    </location>
</feature>
<keyword id="KW-1003">Cell membrane</keyword>
<keyword id="KW-0472">Membrane</keyword>
<keyword id="KW-0520">NAD</keyword>
<keyword id="KW-0874">Quinone</keyword>
<keyword id="KW-1185">Reference proteome</keyword>
<keyword id="KW-1278">Translocase</keyword>
<keyword id="KW-0812">Transmembrane</keyword>
<keyword id="KW-1133">Transmembrane helix</keyword>
<keyword id="KW-0830">Ubiquinone</keyword>
<evidence type="ECO:0000255" key="1">
    <source>
        <dbReference type="HAMAP-Rule" id="MF_01350"/>
    </source>
</evidence>
<reference key="1">
    <citation type="journal article" date="1999" name="Science">
        <title>Genome sequence of the radioresistant bacterium Deinococcus radiodurans R1.</title>
        <authorList>
            <person name="White O."/>
            <person name="Eisen J.A."/>
            <person name="Heidelberg J.F."/>
            <person name="Hickey E.K."/>
            <person name="Peterson J.D."/>
            <person name="Dodson R.J."/>
            <person name="Haft D.H."/>
            <person name="Gwinn M.L."/>
            <person name="Nelson W.C."/>
            <person name="Richardson D.L."/>
            <person name="Moffat K.S."/>
            <person name="Qin H."/>
            <person name="Jiang L."/>
            <person name="Pamphile W."/>
            <person name="Crosby M."/>
            <person name="Shen M."/>
            <person name="Vamathevan J.J."/>
            <person name="Lam P."/>
            <person name="McDonald L.A."/>
            <person name="Utterback T.R."/>
            <person name="Zalewski C."/>
            <person name="Makarova K.S."/>
            <person name="Aravind L."/>
            <person name="Daly M.J."/>
            <person name="Minton K.W."/>
            <person name="Fleischmann R.D."/>
            <person name="Ketchum K.A."/>
            <person name="Nelson K.E."/>
            <person name="Salzberg S.L."/>
            <person name="Smith H.O."/>
            <person name="Venter J.C."/>
            <person name="Fraser C.M."/>
        </authorList>
    </citation>
    <scope>NUCLEOTIDE SEQUENCE [LARGE SCALE GENOMIC DNA]</scope>
    <source>
        <strain>ATCC 13939 / DSM 20539 / JCM 16871 / CCUG 27074 / LMG 4051 / NBRC 15346 / NCIMB 9279 / VKM B-1422 / R1</strain>
    </source>
</reference>
<dbReference type="EC" id="7.1.1.-" evidence="1"/>
<dbReference type="EMBL" id="AE000513">
    <property type="protein sequence ID" value="AAF11065.1"/>
    <property type="molecule type" value="Genomic_DNA"/>
</dbReference>
<dbReference type="PIR" id="D75387">
    <property type="entry name" value="D75387"/>
</dbReference>
<dbReference type="RefSeq" id="NP_295221.1">
    <property type="nucleotide sequence ID" value="NC_001263.1"/>
</dbReference>
<dbReference type="RefSeq" id="WP_010888137.1">
    <property type="nucleotide sequence ID" value="NC_001263.1"/>
</dbReference>
<dbReference type="SMR" id="Q9RU94"/>
<dbReference type="STRING" id="243230.DR_1498"/>
<dbReference type="PaxDb" id="243230-DR_1498"/>
<dbReference type="EnsemblBacteria" id="AAF11065">
    <property type="protein sequence ID" value="AAF11065"/>
    <property type="gene ID" value="DR_1498"/>
</dbReference>
<dbReference type="GeneID" id="69517737"/>
<dbReference type="KEGG" id="dra:DR_1498"/>
<dbReference type="PATRIC" id="fig|243230.17.peg.1701"/>
<dbReference type="eggNOG" id="COG1005">
    <property type="taxonomic scope" value="Bacteria"/>
</dbReference>
<dbReference type="HOGENOM" id="CLU_015134_0_0_0"/>
<dbReference type="InParanoid" id="Q9RU94"/>
<dbReference type="OrthoDB" id="9803734at2"/>
<dbReference type="Proteomes" id="UP000002524">
    <property type="component" value="Chromosome 1"/>
</dbReference>
<dbReference type="GO" id="GO:0005886">
    <property type="term" value="C:plasma membrane"/>
    <property type="evidence" value="ECO:0007669"/>
    <property type="project" value="UniProtKB-SubCell"/>
</dbReference>
<dbReference type="GO" id="GO:0016655">
    <property type="term" value="F:oxidoreductase activity, acting on NAD(P)H, quinone or similar compound as acceptor"/>
    <property type="evidence" value="ECO:0007669"/>
    <property type="project" value="UniProtKB-UniRule"/>
</dbReference>
<dbReference type="GO" id="GO:0048038">
    <property type="term" value="F:quinone binding"/>
    <property type="evidence" value="ECO:0007669"/>
    <property type="project" value="UniProtKB-KW"/>
</dbReference>
<dbReference type="GO" id="GO:0009060">
    <property type="term" value="P:aerobic respiration"/>
    <property type="evidence" value="ECO:0000318"/>
    <property type="project" value="GO_Central"/>
</dbReference>
<dbReference type="HAMAP" id="MF_01350">
    <property type="entry name" value="NDH1_NuoH"/>
    <property type="match status" value="1"/>
</dbReference>
<dbReference type="InterPro" id="IPR001694">
    <property type="entry name" value="NADH_UbQ_OxRdtase_su1/FPO"/>
</dbReference>
<dbReference type="InterPro" id="IPR018086">
    <property type="entry name" value="NADH_UbQ_OxRdtase_su1_CS"/>
</dbReference>
<dbReference type="NCBIfam" id="NF004741">
    <property type="entry name" value="PRK06076.1-2"/>
    <property type="match status" value="1"/>
</dbReference>
<dbReference type="PANTHER" id="PTHR11432">
    <property type="entry name" value="NADH DEHYDROGENASE SUBUNIT 1"/>
    <property type="match status" value="1"/>
</dbReference>
<dbReference type="PANTHER" id="PTHR11432:SF3">
    <property type="entry name" value="NADH-UBIQUINONE OXIDOREDUCTASE CHAIN 1"/>
    <property type="match status" value="1"/>
</dbReference>
<dbReference type="Pfam" id="PF00146">
    <property type="entry name" value="NADHdh"/>
    <property type="match status" value="1"/>
</dbReference>
<dbReference type="PROSITE" id="PS00667">
    <property type="entry name" value="COMPLEX1_ND1_1"/>
    <property type="match status" value="1"/>
</dbReference>
<dbReference type="PROSITE" id="PS00668">
    <property type="entry name" value="COMPLEX1_ND1_2"/>
    <property type="match status" value="1"/>
</dbReference>
<protein>
    <recommendedName>
        <fullName evidence="1">NADH-quinone oxidoreductase subunit H</fullName>
        <ecNumber evidence="1">7.1.1.-</ecNumber>
    </recommendedName>
    <alternativeName>
        <fullName evidence="1">NADH dehydrogenase I subunit H</fullName>
    </alternativeName>
    <alternativeName>
        <fullName evidence="1">NDH-1 subunit H</fullName>
    </alternativeName>
</protein>
<accession>Q9RU94</accession>
<proteinExistence type="inferred from homology"/>